<keyword id="KW-0444">Lipid biosynthesis</keyword>
<keyword id="KW-0443">Lipid metabolism</keyword>
<keyword id="KW-0489">Methyltransferase</keyword>
<keyword id="KW-1185">Reference proteome</keyword>
<keyword id="KW-0949">S-adenosyl-L-methionine</keyword>
<keyword id="KW-0808">Transferase</keyword>
<accession>Q7U1K1</accession>
<accession>A0A1R3XVY3</accession>
<accession>P94925</accession>
<accession>X2BFR1</accession>
<name>MMAA4_MYCBO</name>
<organism>
    <name type="scientific">Mycobacterium bovis (strain ATCC BAA-935 / AF2122/97)</name>
    <dbReference type="NCBI Taxonomy" id="233413"/>
    <lineage>
        <taxon>Bacteria</taxon>
        <taxon>Bacillati</taxon>
        <taxon>Actinomycetota</taxon>
        <taxon>Actinomycetes</taxon>
        <taxon>Mycobacteriales</taxon>
        <taxon>Mycobacteriaceae</taxon>
        <taxon>Mycobacterium</taxon>
        <taxon>Mycobacterium tuberculosis complex</taxon>
    </lineage>
</organism>
<gene>
    <name type="primary">cmaA</name>
    <name type="synonym">mmaA4</name>
    <name type="synonym">mmas-4</name>
    <name type="ordered locus">BQ2027_MB0661C</name>
</gene>
<comment type="function">
    <text evidence="2">Involved in the biosynthesis of hydroxymycolate, a common precursor of oxygenated mycolic acids (methoxymycolate and ketomycolate). Probably transfers a methyl group from the S-adenosylmethionine (SAM) cofactor and, subsequently or simultaneously, a water molecule onto the double bound of ethylene substrates, leading to the formation of the hydroxylated product at the distal position.</text>
</comment>
<comment type="pathway">
    <text>Lipid metabolism; mycolic acid biosynthesis.</text>
</comment>
<comment type="subunit">
    <text evidence="1">Monomer.</text>
</comment>
<comment type="similarity">
    <text evidence="3">Belongs to the CFA/CMAS family.</text>
</comment>
<comment type="sequence caution" evidence="3">
    <conflict type="erroneous initiation">
        <sequence resource="EMBL-CDS" id="AAC44876"/>
    </conflict>
    <text>Truncated N-terminus.</text>
</comment>
<sequence>MTRMAEKPISPTKTRTRFEDIQAHYDVSDDFFALFQDPTRTYSCAYFEPPELTLEEAQYAKVDLNLDKLDLKPGMTLLDIGCGWGTTMRRAVERLDVNVIGLTLSKNQHARCEQVLASIDTNRSRQVLLQGWEDFAEPVDRIVSIEAFEHFGHENYDDFFKRCFNIMPADGRMTVQSSVSYHPYEMAARGKKLSFETARFIKFIVTEIFPGGRLPSTEMMVEHGEKAGFTVPEPLSLRPHYIKTLRIWGDTLQSNKDKAIEVTSEEVYNRYMKYLRGCEHYFTDEMLDCSLVTYLKPGAAA</sequence>
<proteinExistence type="evidence at protein level"/>
<feature type="chain" id="PRO_0000398366" description="Hydroxymycolate synthase MmaA4">
    <location>
        <begin position="1"/>
        <end position="301"/>
    </location>
</feature>
<feature type="active site" evidence="1">
    <location>
        <position position="278"/>
    </location>
</feature>
<feature type="binding site" evidence="1">
    <location>
        <begin position="42"/>
        <end position="43"/>
    </location>
    <ligand>
        <name>S-adenosyl-L-methionine</name>
        <dbReference type="ChEBI" id="CHEBI:59789"/>
    </ligand>
</feature>
<feature type="binding site" evidence="1">
    <location>
        <begin position="81"/>
        <end position="83"/>
    </location>
    <ligand>
        <name>S-adenosyl-L-methionine</name>
        <dbReference type="ChEBI" id="CHEBI:59789"/>
    </ligand>
</feature>
<feature type="binding site" evidence="1">
    <location>
        <begin position="103"/>
        <end position="108"/>
    </location>
    <ligand>
        <name>S-adenosyl-L-methionine</name>
        <dbReference type="ChEBI" id="CHEBI:59789"/>
    </ligand>
</feature>
<feature type="binding site" evidence="1">
    <location>
        <begin position="132"/>
        <end position="133"/>
    </location>
    <ligand>
        <name>S-adenosyl-L-methionine</name>
        <dbReference type="ChEBI" id="CHEBI:59789"/>
    </ligand>
</feature>
<feature type="binding site" evidence="1">
    <location>
        <position position="145"/>
    </location>
    <ligand>
        <name>S-adenosyl-L-methionine</name>
        <dbReference type="ChEBI" id="CHEBI:59789"/>
    </ligand>
</feature>
<reference key="1">
    <citation type="journal article" date="1997" name="Mol. Microbiol.">
        <title>Mycobacterium bovis BCG genes involved in the biosynthesis of cyclopropyl keto- and hydroxy-mycolic acids.</title>
        <authorList>
            <person name="Dubnau E."/>
            <person name="Laneelle M.-A."/>
            <person name="Soares S."/>
            <person name="Benichou A."/>
            <person name="Vaz T."/>
            <person name="Prome D."/>
            <person name="Prome J.-C."/>
            <person name="Daffe M."/>
            <person name="Quemard A."/>
        </authorList>
    </citation>
    <scope>NUCLEOTIDE SEQUENCE [GENOMIC DNA]</scope>
    <scope>FUNCTION IN OXYGEN-CONTAINING MYCOLATES BIOSYNTHESIS</scope>
    <scope>NOMENCLATURE</scope>
    <source>
        <strain>BCG / Pasteur</strain>
    </source>
</reference>
<reference key="2">
    <citation type="journal article" date="2003" name="Proc. Natl. Acad. Sci. U.S.A.">
        <title>The complete genome sequence of Mycobacterium bovis.</title>
        <authorList>
            <person name="Garnier T."/>
            <person name="Eiglmeier K."/>
            <person name="Camus J.-C."/>
            <person name="Medina N."/>
            <person name="Mansoor H."/>
            <person name="Pryor M."/>
            <person name="Duthoy S."/>
            <person name="Grondin S."/>
            <person name="Lacroix C."/>
            <person name="Monsempe C."/>
            <person name="Simon S."/>
            <person name="Harris B."/>
            <person name="Atkin R."/>
            <person name="Doggett J."/>
            <person name="Mayes R."/>
            <person name="Keating L."/>
            <person name="Wheeler P.R."/>
            <person name="Parkhill J."/>
            <person name="Barrell B.G."/>
            <person name="Cole S.T."/>
            <person name="Gordon S.V."/>
            <person name="Hewinson R.G."/>
        </authorList>
    </citation>
    <scope>NUCLEOTIDE SEQUENCE [LARGE SCALE GENOMIC DNA]</scope>
    <source>
        <strain>ATCC BAA-935 / AF2122/97</strain>
    </source>
</reference>
<reference key="3">
    <citation type="journal article" date="2017" name="Genome Announc.">
        <title>Updated reference genome sequence and annotation of Mycobacterium bovis AF2122/97.</title>
        <authorList>
            <person name="Malone K.M."/>
            <person name="Farrell D."/>
            <person name="Stuber T.P."/>
            <person name="Schubert O.T."/>
            <person name="Aebersold R."/>
            <person name="Robbe-Austerman S."/>
            <person name="Gordon S.V."/>
        </authorList>
    </citation>
    <scope>NUCLEOTIDE SEQUENCE [LARGE SCALE GENOMIC DNA]</scope>
    <scope>GENOME REANNOTATION</scope>
    <source>
        <strain>ATCC BAA-935 / AF2122/97</strain>
    </source>
</reference>
<protein>
    <recommendedName>
        <fullName>Hydroxymycolate synthase MmaA4</fullName>
        <ecNumber>2.1.1.-</ecNumber>
    </recommendedName>
    <alternativeName>
        <fullName>Mycolic acid methyltransferase</fullName>
        <shortName>MA-MT</shortName>
    </alternativeName>
    <alternativeName>
        <fullName>S-adenosylmethionine-dependent methyltransferase</fullName>
        <shortName>AdoMet-MT</shortName>
    </alternativeName>
</protein>
<evidence type="ECO:0000250" key="1"/>
<evidence type="ECO:0000269" key="2">
    <source>
    </source>
</evidence>
<evidence type="ECO:0000305" key="3"/>
<dbReference type="EC" id="2.1.1.-"/>
<dbReference type="EMBL" id="U77466">
    <property type="protein sequence ID" value="AAC44876.1"/>
    <property type="status" value="ALT_INIT"/>
    <property type="molecule type" value="Genomic_DNA"/>
</dbReference>
<dbReference type="EMBL" id="LT708304">
    <property type="protein sequence ID" value="SIT99259.1"/>
    <property type="molecule type" value="Genomic_DNA"/>
</dbReference>
<dbReference type="RefSeq" id="NP_854319.1">
    <property type="nucleotide sequence ID" value="NC_002945.3"/>
</dbReference>
<dbReference type="RefSeq" id="WP_003910170.1">
    <property type="nucleotide sequence ID" value="NC_002945.4"/>
</dbReference>
<dbReference type="SMR" id="Q7U1K1"/>
<dbReference type="KEGG" id="mbo:BQ2027_MB0661C"/>
<dbReference type="PATRIC" id="fig|233413.5.peg.721"/>
<dbReference type="UniPathway" id="UPA00915"/>
<dbReference type="Proteomes" id="UP000001419">
    <property type="component" value="Chromosome"/>
</dbReference>
<dbReference type="GO" id="GO:0008168">
    <property type="term" value="F:methyltransferase activity"/>
    <property type="evidence" value="ECO:0000315"/>
    <property type="project" value="UniProtKB"/>
</dbReference>
<dbReference type="GO" id="GO:0032259">
    <property type="term" value="P:methylation"/>
    <property type="evidence" value="ECO:0007669"/>
    <property type="project" value="UniProtKB-KW"/>
</dbReference>
<dbReference type="GO" id="GO:0071768">
    <property type="term" value="P:mycolic acid biosynthetic process"/>
    <property type="evidence" value="ECO:0000315"/>
    <property type="project" value="UniProtKB"/>
</dbReference>
<dbReference type="CDD" id="cd02440">
    <property type="entry name" value="AdoMet_MTases"/>
    <property type="match status" value="1"/>
</dbReference>
<dbReference type="FunFam" id="3.40.50.150:FF:000115">
    <property type="entry name" value="Cyclopropane mycolic acid synthase 1"/>
    <property type="match status" value="1"/>
</dbReference>
<dbReference type="Gene3D" id="3.40.50.150">
    <property type="entry name" value="Vaccinia Virus protein VP39"/>
    <property type="match status" value="1"/>
</dbReference>
<dbReference type="InterPro" id="IPR050723">
    <property type="entry name" value="CFA/CMAS"/>
</dbReference>
<dbReference type="InterPro" id="IPR003333">
    <property type="entry name" value="CMAS"/>
</dbReference>
<dbReference type="InterPro" id="IPR047672">
    <property type="entry name" value="CMAS_actinobact"/>
</dbReference>
<dbReference type="InterPro" id="IPR029063">
    <property type="entry name" value="SAM-dependent_MTases_sf"/>
</dbReference>
<dbReference type="NCBIfam" id="NF040660">
    <property type="entry name" value="mycolic_MTase"/>
    <property type="match status" value="1"/>
</dbReference>
<dbReference type="PANTHER" id="PTHR43667">
    <property type="entry name" value="CYCLOPROPANE-FATTY-ACYL-PHOSPHOLIPID SYNTHASE"/>
    <property type="match status" value="1"/>
</dbReference>
<dbReference type="PANTHER" id="PTHR43667:SF1">
    <property type="entry name" value="CYCLOPROPANE-FATTY-ACYL-PHOSPHOLIPID SYNTHASE"/>
    <property type="match status" value="1"/>
</dbReference>
<dbReference type="Pfam" id="PF02353">
    <property type="entry name" value="CMAS"/>
    <property type="match status" value="1"/>
</dbReference>
<dbReference type="PIRSF" id="PIRSF003085">
    <property type="entry name" value="CMAS"/>
    <property type="match status" value="1"/>
</dbReference>
<dbReference type="SUPFAM" id="SSF53335">
    <property type="entry name" value="S-adenosyl-L-methionine-dependent methyltransferases"/>
    <property type="match status" value="1"/>
</dbReference>